<evidence type="ECO:0000250" key="1"/>
<evidence type="ECO:0000255" key="2">
    <source>
        <dbReference type="HAMAP-Rule" id="MF_00403"/>
    </source>
</evidence>
<evidence type="ECO:0000305" key="3"/>
<sequence length="127" mass="14075">MPTINQLVRKERKKVIVKSKSPALKECPQRRGVCTRVYTTTPKKPNSALRKVAKVRLTSGFEVISYIGGEGHNLQEHSIVLVRGGRVKDLPGVKYHIVRGALDTAGVAKRTVSRSKYGAKRPKDAKK</sequence>
<organism>
    <name type="scientific">Campylobacter fetus subsp. fetus (strain 82-40)</name>
    <dbReference type="NCBI Taxonomy" id="360106"/>
    <lineage>
        <taxon>Bacteria</taxon>
        <taxon>Pseudomonadati</taxon>
        <taxon>Campylobacterota</taxon>
        <taxon>Epsilonproteobacteria</taxon>
        <taxon>Campylobacterales</taxon>
        <taxon>Campylobacteraceae</taxon>
        <taxon>Campylobacter</taxon>
    </lineage>
</organism>
<proteinExistence type="inferred from homology"/>
<comment type="function">
    <text evidence="2">With S4 and S5 plays an important role in translational accuracy.</text>
</comment>
<comment type="function">
    <text evidence="2">Interacts with and stabilizes bases of the 16S rRNA that are involved in tRNA selection in the A site and with the mRNA backbone. Located at the interface of the 30S and 50S subunits, it traverses the body of the 30S subunit contacting proteins on the other side and probably holding the rRNA structure together. The combined cluster of proteins S8, S12 and S17 appears to hold together the shoulder and platform of the 30S subunit.</text>
</comment>
<comment type="subunit">
    <text evidence="2">Part of the 30S ribosomal subunit. Contacts proteins S8 and S17. May interact with IF1 in the 30S initiation complex.</text>
</comment>
<comment type="similarity">
    <text evidence="2">Belongs to the universal ribosomal protein uS12 family.</text>
</comment>
<comment type="sequence caution" evidence="3">
    <conflict type="erroneous initiation">
        <sequence resource="EMBL-CDS" id="ABK82403"/>
    </conflict>
</comment>
<accession>A0RQI2</accession>
<dbReference type="EMBL" id="CP000487">
    <property type="protein sequence ID" value="ABK82403.1"/>
    <property type="status" value="ALT_INIT"/>
    <property type="molecule type" value="Genomic_DNA"/>
</dbReference>
<dbReference type="RefSeq" id="WP_002850111.1">
    <property type="nucleotide sequence ID" value="NC_008599.1"/>
</dbReference>
<dbReference type="SMR" id="A0RQI2"/>
<dbReference type="GeneID" id="93112908"/>
<dbReference type="KEGG" id="cff:CFF8240_1313"/>
<dbReference type="eggNOG" id="COG0048">
    <property type="taxonomic scope" value="Bacteria"/>
</dbReference>
<dbReference type="HOGENOM" id="CLU_104295_1_2_7"/>
<dbReference type="Proteomes" id="UP000000760">
    <property type="component" value="Chromosome"/>
</dbReference>
<dbReference type="GO" id="GO:0015935">
    <property type="term" value="C:small ribosomal subunit"/>
    <property type="evidence" value="ECO:0007669"/>
    <property type="project" value="InterPro"/>
</dbReference>
<dbReference type="GO" id="GO:0019843">
    <property type="term" value="F:rRNA binding"/>
    <property type="evidence" value="ECO:0007669"/>
    <property type="project" value="UniProtKB-UniRule"/>
</dbReference>
<dbReference type="GO" id="GO:0003735">
    <property type="term" value="F:structural constituent of ribosome"/>
    <property type="evidence" value="ECO:0007669"/>
    <property type="project" value="InterPro"/>
</dbReference>
<dbReference type="GO" id="GO:0000049">
    <property type="term" value="F:tRNA binding"/>
    <property type="evidence" value="ECO:0007669"/>
    <property type="project" value="UniProtKB-UniRule"/>
</dbReference>
<dbReference type="GO" id="GO:0006412">
    <property type="term" value="P:translation"/>
    <property type="evidence" value="ECO:0007669"/>
    <property type="project" value="UniProtKB-UniRule"/>
</dbReference>
<dbReference type="CDD" id="cd03368">
    <property type="entry name" value="Ribosomal_S12"/>
    <property type="match status" value="1"/>
</dbReference>
<dbReference type="FunFam" id="2.40.50.140:FF:000001">
    <property type="entry name" value="30S ribosomal protein S12"/>
    <property type="match status" value="1"/>
</dbReference>
<dbReference type="Gene3D" id="2.40.50.140">
    <property type="entry name" value="Nucleic acid-binding proteins"/>
    <property type="match status" value="1"/>
</dbReference>
<dbReference type="HAMAP" id="MF_00403_B">
    <property type="entry name" value="Ribosomal_uS12_B"/>
    <property type="match status" value="1"/>
</dbReference>
<dbReference type="InterPro" id="IPR012340">
    <property type="entry name" value="NA-bd_OB-fold"/>
</dbReference>
<dbReference type="InterPro" id="IPR006032">
    <property type="entry name" value="Ribosomal_uS12"/>
</dbReference>
<dbReference type="InterPro" id="IPR005679">
    <property type="entry name" value="Ribosomal_uS12_bac"/>
</dbReference>
<dbReference type="NCBIfam" id="TIGR00981">
    <property type="entry name" value="rpsL_bact"/>
    <property type="match status" value="1"/>
</dbReference>
<dbReference type="PANTHER" id="PTHR11652">
    <property type="entry name" value="30S RIBOSOMAL PROTEIN S12 FAMILY MEMBER"/>
    <property type="match status" value="1"/>
</dbReference>
<dbReference type="Pfam" id="PF00164">
    <property type="entry name" value="Ribosom_S12_S23"/>
    <property type="match status" value="1"/>
</dbReference>
<dbReference type="PIRSF" id="PIRSF002133">
    <property type="entry name" value="Ribosomal_S12/S23"/>
    <property type="match status" value="1"/>
</dbReference>
<dbReference type="PRINTS" id="PR01034">
    <property type="entry name" value="RIBOSOMALS12"/>
</dbReference>
<dbReference type="SUPFAM" id="SSF50249">
    <property type="entry name" value="Nucleic acid-binding proteins"/>
    <property type="match status" value="1"/>
</dbReference>
<dbReference type="PROSITE" id="PS00055">
    <property type="entry name" value="RIBOSOMAL_S12"/>
    <property type="match status" value="1"/>
</dbReference>
<gene>
    <name evidence="2" type="primary">rpsL</name>
    <name type="ordered locus">CFF8240_1313</name>
</gene>
<feature type="chain" id="PRO_0000295963" description="Small ribosomal subunit protein uS12">
    <location>
        <begin position="1"/>
        <end position="127"/>
    </location>
</feature>
<feature type="modified residue" description="3-methylthioaspartic acid" evidence="1">
    <location>
        <position position="89"/>
    </location>
</feature>
<keyword id="KW-0488">Methylation</keyword>
<keyword id="KW-0687">Ribonucleoprotein</keyword>
<keyword id="KW-0689">Ribosomal protein</keyword>
<keyword id="KW-0694">RNA-binding</keyword>
<keyword id="KW-0699">rRNA-binding</keyword>
<keyword id="KW-0820">tRNA-binding</keyword>
<name>RS12_CAMFF</name>
<protein>
    <recommendedName>
        <fullName evidence="2">Small ribosomal subunit protein uS12</fullName>
    </recommendedName>
    <alternativeName>
        <fullName evidence="3">30S ribosomal protein S12</fullName>
    </alternativeName>
</protein>
<reference key="1">
    <citation type="submission" date="2006-11" db="EMBL/GenBank/DDBJ databases">
        <title>Sequence of Campylobacter fetus subsp. fetus 82-40.</title>
        <authorList>
            <person name="Fouts D.E."/>
            <person name="Nelson K.E."/>
        </authorList>
    </citation>
    <scope>NUCLEOTIDE SEQUENCE [LARGE SCALE GENOMIC DNA]</scope>
    <source>
        <strain>82-40</strain>
    </source>
</reference>